<accession>Q71VQ8</accession>
<comment type="function">
    <text evidence="1">Required for the insertion and/or proper folding and/or complex formation of integral membrane proteins into the membrane. Involved in integration of membrane proteins that insert both dependently and independently of the Sec translocase complex, as well as at least some lipoproteins.</text>
</comment>
<comment type="subcellular location">
    <subcellularLocation>
        <location evidence="1">Cell membrane</location>
        <topology evidence="1">Multi-pass membrane protein</topology>
    </subcellularLocation>
</comment>
<comment type="similarity">
    <text evidence="1">Belongs to the OXA1/ALB3/YidC family. Type 2 subfamily.</text>
</comment>
<name>YIDC1_LISMF</name>
<keyword id="KW-1003">Cell membrane</keyword>
<keyword id="KW-0143">Chaperone</keyword>
<keyword id="KW-0449">Lipoprotein</keyword>
<keyword id="KW-0472">Membrane</keyword>
<keyword id="KW-0564">Palmitate</keyword>
<keyword id="KW-0653">Protein transport</keyword>
<keyword id="KW-0732">Signal</keyword>
<keyword id="KW-0812">Transmembrane</keyword>
<keyword id="KW-1133">Transmembrane helix</keyword>
<keyword id="KW-0813">Transport</keyword>
<sequence>MKKKKRFKQKLLIASLVIGLMAVLSGCGYSTDPITSESTGFWSHYIVFPLSWTITWFSDLFGGSYAVGIIVVTILIRLLIMPLMIKQLKSQKAMTNLQPKIKELQEKYSSKDNETKQKLQQETMRLYQENSVNPMMGCLPLLIQMPILLGFYQAISRTAEIKTDSFLWMQLGNPDPYYILPVVAALTTFLSSKISMMGQTQQNKSMAMIVYIMPVMILFMGITLPSALALYWIIGNIFTVFQTLLINNPFKNKREQEALAAAQVAEDRLKKKAANMKASKKGGKKRK</sequence>
<evidence type="ECO:0000255" key="1">
    <source>
        <dbReference type="HAMAP-Rule" id="MF_01811"/>
    </source>
</evidence>
<gene>
    <name evidence="1" type="primary">yidC1</name>
    <name type="ordered locus">LMOf2365_2844</name>
</gene>
<proteinExistence type="inferred from homology"/>
<dbReference type="EMBL" id="AE017262">
    <property type="protein sequence ID" value="AAT05608.1"/>
    <property type="molecule type" value="Genomic_DNA"/>
</dbReference>
<dbReference type="SMR" id="Q71VQ8"/>
<dbReference type="KEGG" id="lmf:LMOf2365_2844"/>
<dbReference type="HOGENOM" id="CLU_036138_5_0_9"/>
<dbReference type="GO" id="GO:0005886">
    <property type="term" value="C:plasma membrane"/>
    <property type="evidence" value="ECO:0007669"/>
    <property type="project" value="UniProtKB-SubCell"/>
</dbReference>
<dbReference type="GO" id="GO:0032977">
    <property type="term" value="F:membrane insertase activity"/>
    <property type="evidence" value="ECO:0007669"/>
    <property type="project" value="InterPro"/>
</dbReference>
<dbReference type="GO" id="GO:0051205">
    <property type="term" value="P:protein insertion into membrane"/>
    <property type="evidence" value="ECO:0007669"/>
    <property type="project" value="TreeGrafter"/>
</dbReference>
<dbReference type="GO" id="GO:0015031">
    <property type="term" value="P:protein transport"/>
    <property type="evidence" value="ECO:0007669"/>
    <property type="project" value="UniProtKB-KW"/>
</dbReference>
<dbReference type="CDD" id="cd20070">
    <property type="entry name" value="5TM_YidC_Alb3"/>
    <property type="match status" value="1"/>
</dbReference>
<dbReference type="HAMAP" id="MF_01811">
    <property type="entry name" value="YidC_type2"/>
    <property type="match status" value="1"/>
</dbReference>
<dbReference type="InterPro" id="IPR001708">
    <property type="entry name" value="YidC/ALB3/OXA1/COX18"/>
</dbReference>
<dbReference type="InterPro" id="IPR028055">
    <property type="entry name" value="YidC/Oxa/ALB_C"/>
</dbReference>
<dbReference type="InterPro" id="IPR023060">
    <property type="entry name" value="YidC/YidC1/YidC2_Firmicutes"/>
</dbReference>
<dbReference type="InterPro" id="IPR047196">
    <property type="entry name" value="YidC_ALB_C"/>
</dbReference>
<dbReference type="NCBIfam" id="TIGR03592">
    <property type="entry name" value="yidC_oxa1_cterm"/>
    <property type="match status" value="1"/>
</dbReference>
<dbReference type="PANTHER" id="PTHR12428:SF65">
    <property type="entry name" value="CYTOCHROME C OXIDASE ASSEMBLY PROTEIN COX18, MITOCHONDRIAL"/>
    <property type="match status" value="1"/>
</dbReference>
<dbReference type="PANTHER" id="PTHR12428">
    <property type="entry name" value="OXA1"/>
    <property type="match status" value="1"/>
</dbReference>
<dbReference type="Pfam" id="PF02096">
    <property type="entry name" value="60KD_IMP"/>
    <property type="match status" value="1"/>
</dbReference>
<dbReference type="PRINTS" id="PR00701">
    <property type="entry name" value="60KDINNERMP"/>
</dbReference>
<dbReference type="PROSITE" id="PS51257">
    <property type="entry name" value="PROKAR_LIPOPROTEIN"/>
    <property type="match status" value="1"/>
</dbReference>
<protein>
    <recommendedName>
        <fullName evidence="1">Membrane protein insertase YidC 1</fullName>
    </recommendedName>
    <alternativeName>
        <fullName evidence="1">Foldase YidC 1</fullName>
    </alternativeName>
    <alternativeName>
        <fullName evidence="1">Membrane integrase YidC 1</fullName>
    </alternativeName>
    <alternativeName>
        <fullName evidence="1">Membrane protein YidC 1</fullName>
    </alternativeName>
</protein>
<feature type="signal peptide" evidence="1">
    <location>
        <begin position="1"/>
        <end position="26"/>
    </location>
</feature>
<feature type="chain" id="PRO_0000020387" description="Membrane protein insertase YidC 1">
    <location>
        <begin position="27"/>
        <end position="287"/>
    </location>
</feature>
<feature type="transmembrane region" description="Helical" evidence="1">
    <location>
        <begin position="65"/>
        <end position="85"/>
    </location>
</feature>
<feature type="transmembrane region" description="Helical" evidence="1">
    <location>
        <begin position="135"/>
        <end position="155"/>
    </location>
</feature>
<feature type="transmembrane region" description="Helical" evidence="1">
    <location>
        <begin position="178"/>
        <end position="198"/>
    </location>
</feature>
<feature type="transmembrane region" description="Helical" evidence="1">
    <location>
        <begin position="207"/>
        <end position="224"/>
    </location>
</feature>
<feature type="transmembrane region" description="Helical" evidence="1">
    <location>
        <begin position="228"/>
        <end position="250"/>
    </location>
</feature>
<feature type="lipid moiety-binding region" description="N-palmitoyl cysteine" evidence="1">
    <location>
        <position position="27"/>
    </location>
</feature>
<feature type="lipid moiety-binding region" description="S-diacylglycerol cysteine" evidence="1">
    <location>
        <position position="27"/>
    </location>
</feature>
<organism>
    <name type="scientific">Listeria monocytogenes serotype 4b (strain F2365)</name>
    <dbReference type="NCBI Taxonomy" id="265669"/>
    <lineage>
        <taxon>Bacteria</taxon>
        <taxon>Bacillati</taxon>
        <taxon>Bacillota</taxon>
        <taxon>Bacilli</taxon>
        <taxon>Bacillales</taxon>
        <taxon>Listeriaceae</taxon>
        <taxon>Listeria</taxon>
    </lineage>
</organism>
<reference key="1">
    <citation type="journal article" date="2004" name="Nucleic Acids Res.">
        <title>Whole genome comparisons of serotype 4b and 1/2a strains of the food-borne pathogen Listeria monocytogenes reveal new insights into the core genome components of this species.</title>
        <authorList>
            <person name="Nelson K.E."/>
            <person name="Fouts D.E."/>
            <person name="Mongodin E.F."/>
            <person name="Ravel J."/>
            <person name="DeBoy R.T."/>
            <person name="Kolonay J.F."/>
            <person name="Rasko D.A."/>
            <person name="Angiuoli S.V."/>
            <person name="Gill S.R."/>
            <person name="Paulsen I.T."/>
            <person name="Peterson J.D."/>
            <person name="White O."/>
            <person name="Nelson W.C."/>
            <person name="Nierman W.C."/>
            <person name="Beanan M.J."/>
            <person name="Brinkac L.M."/>
            <person name="Daugherty S.C."/>
            <person name="Dodson R.J."/>
            <person name="Durkin A.S."/>
            <person name="Madupu R."/>
            <person name="Haft D.H."/>
            <person name="Selengut J."/>
            <person name="Van Aken S.E."/>
            <person name="Khouri H.M."/>
            <person name="Fedorova N."/>
            <person name="Forberger H.A."/>
            <person name="Tran B."/>
            <person name="Kathariou S."/>
            <person name="Wonderling L.D."/>
            <person name="Uhlich G.A."/>
            <person name="Bayles D.O."/>
            <person name="Luchansky J.B."/>
            <person name="Fraser C.M."/>
        </authorList>
    </citation>
    <scope>NUCLEOTIDE SEQUENCE [LARGE SCALE GENOMIC DNA]</scope>
    <source>
        <strain>F2365</strain>
    </source>
</reference>